<feature type="chain" id="PRO_0000350596" description="Copper-exporting P-type ATPase">
    <location>
        <begin position="1"/>
        <end position="802"/>
    </location>
</feature>
<feature type="transmembrane region" description="Helical" evidence="2">
    <location>
        <begin position="161"/>
        <end position="181"/>
    </location>
</feature>
<feature type="transmembrane region" description="Helical" evidence="2">
    <location>
        <begin position="192"/>
        <end position="212"/>
    </location>
</feature>
<feature type="transmembrane region" description="Helical" evidence="2">
    <location>
        <begin position="224"/>
        <end position="244"/>
    </location>
</feature>
<feature type="transmembrane region" description="Helical" evidence="2">
    <location>
        <begin position="256"/>
        <end position="276"/>
    </location>
</feature>
<feature type="transmembrane region" description="Helical" evidence="2">
    <location>
        <begin position="411"/>
        <end position="431"/>
    </location>
</feature>
<feature type="transmembrane region" description="Helical" evidence="2">
    <location>
        <begin position="438"/>
        <end position="458"/>
    </location>
</feature>
<feature type="transmembrane region" description="Helical" evidence="2">
    <location>
        <begin position="748"/>
        <end position="767"/>
    </location>
</feature>
<feature type="transmembrane region" description="Helical" evidence="2">
    <location>
        <begin position="771"/>
        <end position="790"/>
    </location>
</feature>
<feature type="domain" description="HMA 1" evidence="3">
    <location>
        <begin position="5"/>
        <end position="70"/>
    </location>
</feature>
<feature type="domain" description="HMA 2" evidence="3">
    <location>
        <begin position="72"/>
        <end position="138"/>
    </location>
</feature>
<feature type="active site" description="4-aspartylphosphate intermediate" evidence="1">
    <location>
        <position position="495"/>
    </location>
</feature>
<feature type="binding site" evidence="3">
    <location>
        <position position="16"/>
    </location>
    <ligand>
        <name>Cu(+)</name>
        <dbReference type="ChEBI" id="CHEBI:49552"/>
        <label>1</label>
    </ligand>
</feature>
<feature type="binding site" evidence="3">
    <location>
        <position position="19"/>
    </location>
    <ligand>
        <name>Cu(+)</name>
        <dbReference type="ChEBI" id="CHEBI:49552"/>
        <label>1</label>
    </ligand>
</feature>
<feature type="binding site" evidence="3">
    <location>
        <position position="83"/>
    </location>
    <ligand>
        <name>Cu(+)</name>
        <dbReference type="ChEBI" id="CHEBI:49552"/>
        <label>2</label>
    </ligand>
</feature>
<feature type="binding site" evidence="3">
    <location>
        <position position="86"/>
    </location>
    <ligand>
        <name>Cu(+)</name>
        <dbReference type="ChEBI" id="CHEBI:49552"/>
        <label>2</label>
    </ligand>
</feature>
<feature type="binding site">
    <location>
        <position position="690"/>
    </location>
    <ligand>
        <name>Mg(2+)</name>
        <dbReference type="ChEBI" id="CHEBI:18420"/>
    </ligand>
</feature>
<feature type="binding site">
    <location>
        <position position="694"/>
    </location>
    <ligand>
        <name>Mg(2+)</name>
        <dbReference type="ChEBI" id="CHEBI:18420"/>
    </ligand>
</feature>
<keyword id="KW-0067">ATP-binding</keyword>
<keyword id="KW-1003">Cell membrane</keyword>
<keyword id="KW-0186">Copper</keyword>
<keyword id="KW-0187">Copper transport</keyword>
<keyword id="KW-0406">Ion transport</keyword>
<keyword id="KW-0460">Magnesium</keyword>
<keyword id="KW-0472">Membrane</keyword>
<keyword id="KW-0479">Metal-binding</keyword>
<keyword id="KW-0547">Nucleotide-binding</keyword>
<keyword id="KW-0597">Phosphoprotein</keyword>
<keyword id="KW-0677">Repeat</keyword>
<keyword id="KW-1278">Translocase</keyword>
<keyword id="KW-0812">Transmembrane</keyword>
<keyword id="KW-1133">Transmembrane helix</keyword>
<keyword id="KW-0813">Transport</keyword>
<sequence>MANTKKTTLDITGMTCAACSNRIEKKLNKLDDVNAQVNLTTEKATVEYNPDQHDVQEFINTIQHLGYGVAVETVELDITGMTCAACSSRIEKVLNKMDGVQNATVNLTTEQAKVDYYPEETDADKLVTRIQKLGYDASIKDNNKDQTSRKAEALQHKLIKLIISAVLSLPLLMLMFVHLFNMHIPALFTNPWFQFILATPVQFIIGWQFYVGAYKNLRNGGANMDVLVAVGTSAAYFYSIYEMVRWLNGSTTQPHLYFETSAVLITLILFGKYLEARAKSQTTNALGELLSLQAKEARILKDGNEVMIPLNEVHVGDTLIVKPGEKIPVDGKIIKGMTAIDESMLTGESIPVEKNVDDTVIGSTMNKNGTITMTATKVGGDTALANIIKVVEEAQSSKAPIQRLADIISGYFVPIVVGIALLTFIVWITLVTPGTFEPALVASISVLVIACPCALGLATPTSIMVGTGRAAENGILFKGGEFVERTHQIDTIVLDKTGTITNGRPVVTDYHGDNQTLQLLATAEKDSEHPLAEAIVNYAKEKQLILTETTTFKAVPGHGIEATIDHHYILVGNRKLMADNDISLPKHISDDLTHYERDGKTAMLIAVNYSLTGIIAVADTVKDHAKDAIKQLHDMGIEVAMLTGDNKNTAQAIAKQVGIDTVIADILPEEKAAQIAKLQQQGKKVAMVGDGVNDAPALVKADIGIAIGTGTEVAIEAADITILGGDLMLIPKAIYASKATIRNIRQNLFWAFGYNIAGIPIAALGLLAPWVAGAAMALSSVSVVTNALRLKKMRLEPRRKDA</sequence>
<proteinExistence type="inferred from homology"/>
<accession>Q2FDV0</accession>
<organism>
    <name type="scientific">Staphylococcus aureus (strain USA300)</name>
    <dbReference type="NCBI Taxonomy" id="367830"/>
    <lineage>
        <taxon>Bacteria</taxon>
        <taxon>Bacillati</taxon>
        <taxon>Bacillota</taxon>
        <taxon>Bacilli</taxon>
        <taxon>Bacillales</taxon>
        <taxon>Staphylococcaceae</taxon>
        <taxon>Staphylococcus</taxon>
    </lineage>
</organism>
<reference key="1">
    <citation type="journal article" date="2006" name="Lancet">
        <title>Complete genome sequence of USA300, an epidemic clone of community-acquired meticillin-resistant Staphylococcus aureus.</title>
        <authorList>
            <person name="Diep B.A."/>
            <person name="Gill S.R."/>
            <person name="Chang R.F."/>
            <person name="Phan T.H."/>
            <person name="Chen J.H."/>
            <person name="Davidson M.G."/>
            <person name="Lin F."/>
            <person name="Lin J."/>
            <person name="Carleton H.A."/>
            <person name="Mongodin E.F."/>
            <person name="Sensabaugh G.F."/>
            <person name="Perdreau-Remington F."/>
        </authorList>
    </citation>
    <scope>NUCLEOTIDE SEQUENCE [LARGE SCALE GENOMIC DNA]</scope>
    <source>
        <strain>USA300</strain>
    </source>
</reference>
<name>COPA_STAA3</name>
<protein>
    <recommendedName>
        <fullName>Copper-exporting P-type ATPase</fullName>
        <ecNumber>7.2.2.8</ecNumber>
    </recommendedName>
    <alternativeName>
        <fullName>Copper-exporting P-type ATPase A</fullName>
    </alternativeName>
    <alternativeName>
        <fullName>Cu(+)-exporting ATPase</fullName>
    </alternativeName>
</protein>
<gene>
    <name type="primary">copA</name>
    <name type="ordered locus">SAUSA300_2494</name>
</gene>
<dbReference type="EC" id="7.2.2.8"/>
<dbReference type="EMBL" id="CP000255">
    <property type="protein sequence ID" value="ABD21325.1"/>
    <property type="molecule type" value="Genomic_DNA"/>
</dbReference>
<dbReference type="RefSeq" id="WP_000024128.1">
    <property type="nucleotide sequence ID" value="NZ_CP027476.1"/>
</dbReference>
<dbReference type="SMR" id="Q2FDV0"/>
<dbReference type="KEGG" id="saa:SAUSA300_2494"/>
<dbReference type="HOGENOM" id="CLU_001771_0_3_9"/>
<dbReference type="OMA" id="HWMLPAW"/>
<dbReference type="Proteomes" id="UP000001939">
    <property type="component" value="Chromosome"/>
</dbReference>
<dbReference type="GO" id="GO:0005886">
    <property type="term" value="C:plasma membrane"/>
    <property type="evidence" value="ECO:0007669"/>
    <property type="project" value="UniProtKB-SubCell"/>
</dbReference>
<dbReference type="GO" id="GO:0005524">
    <property type="term" value="F:ATP binding"/>
    <property type="evidence" value="ECO:0007669"/>
    <property type="project" value="UniProtKB-KW"/>
</dbReference>
<dbReference type="GO" id="GO:0016887">
    <property type="term" value="F:ATP hydrolysis activity"/>
    <property type="evidence" value="ECO:0007669"/>
    <property type="project" value="InterPro"/>
</dbReference>
<dbReference type="GO" id="GO:0005507">
    <property type="term" value="F:copper ion binding"/>
    <property type="evidence" value="ECO:0007669"/>
    <property type="project" value="InterPro"/>
</dbReference>
<dbReference type="GO" id="GO:0043682">
    <property type="term" value="F:P-type divalent copper transporter activity"/>
    <property type="evidence" value="ECO:0007669"/>
    <property type="project" value="TreeGrafter"/>
</dbReference>
<dbReference type="GO" id="GO:0140581">
    <property type="term" value="F:P-type monovalent copper transporter activity"/>
    <property type="evidence" value="ECO:0007669"/>
    <property type="project" value="UniProtKB-EC"/>
</dbReference>
<dbReference type="GO" id="GO:0055070">
    <property type="term" value="P:copper ion homeostasis"/>
    <property type="evidence" value="ECO:0007669"/>
    <property type="project" value="TreeGrafter"/>
</dbReference>
<dbReference type="CDD" id="cd00371">
    <property type="entry name" value="HMA"/>
    <property type="match status" value="2"/>
</dbReference>
<dbReference type="CDD" id="cd02094">
    <property type="entry name" value="P-type_ATPase_Cu-like"/>
    <property type="match status" value="1"/>
</dbReference>
<dbReference type="FunFam" id="3.40.1110.10:FF:000038">
    <property type="entry name" value="Copper-exporting P-type ATPase"/>
    <property type="match status" value="1"/>
</dbReference>
<dbReference type="FunFam" id="3.40.1110.10:FF:000049">
    <property type="entry name" value="Copper-exporting P-type ATPase"/>
    <property type="match status" value="1"/>
</dbReference>
<dbReference type="FunFam" id="2.70.150.10:FF:000020">
    <property type="entry name" value="Copper-exporting P-type ATPase A"/>
    <property type="match status" value="1"/>
</dbReference>
<dbReference type="FunFam" id="3.30.70.100:FF:000005">
    <property type="entry name" value="Copper-exporting P-type ATPase A"/>
    <property type="match status" value="2"/>
</dbReference>
<dbReference type="FunFam" id="3.40.50.1000:FF:000144">
    <property type="entry name" value="copper-transporting ATPase 1 isoform X2"/>
    <property type="match status" value="1"/>
</dbReference>
<dbReference type="Gene3D" id="3.30.70.100">
    <property type="match status" value="2"/>
</dbReference>
<dbReference type="Gene3D" id="3.40.1110.10">
    <property type="entry name" value="Calcium-transporting ATPase, cytoplasmic domain N"/>
    <property type="match status" value="2"/>
</dbReference>
<dbReference type="Gene3D" id="2.70.150.10">
    <property type="entry name" value="Calcium-transporting ATPase, cytoplasmic transduction domain A"/>
    <property type="match status" value="1"/>
</dbReference>
<dbReference type="Gene3D" id="3.40.50.1000">
    <property type="entry name" value="HAD superfamily/HAD-like"/>
    <property type="match status" value="1"/>
</dbReference>
<dbReference type="InterPro" id="IPR023299">
    <property type="entry name" value="ATPase_P-typ_cyto_dom_N"/>
</dbReference>
<dbReference type="InterPro" id="IPR018303">
    <property type="entry name" value="ATPase_P-typ_P_site"/>
</dbReference>
<dbReference type="InterPro" id="IPR023298">
    <property type="entry name" value="ATPase_P-typ_TM_dom_sf"/>
</dbReference>
<dbReference type="InterPro" id="IPR008250">
    <property type="entry name" value="ATPase_P-typ_transduc_dom_A_sf"/>
</dbReference>
<dbReference type="InterPro" id="IPR036412">
    <property type="entry name" value="HAD-like_sf"/>
</dbReference>
<dbReference type="InterPro" id="IPR023214">
    <property type="entry name" value="HAD_sf"/>
</dbReference>
<dbReference type="InterPro" id="IPR017969">
    <property type="entry name" value="Heavy-metal-associated_CS"/>
</dbReference>
<dbReference type="InterPro" id="IPR006122">
    <property type="entry name" value="HMA_Cu_ion-bd"/>
</dbReference>
<dbReference type="InterPro" id="IPR006121">
    <property type="entry name" value="HMA_dom"/>
</dbReference>
<dbReference type="InterPro" id="IPR036163">
    <property type="entry name" value="HMA_dom_sf"/>
</dbReference>
<dbReference type="InterPro" id="IPR027256">
    <property type="entry name" value="P-typ_ATPase_IB"/>
</dbReference>
<dbReference type="InterPro" id="IPR001757">
    <property type="entry name" value="P_typ_ATPase"/>
</dbReference>
<dbReference type="InterPro" id="IPR044492">
    <property type="entry name" value="P_typ_ATPase_HD_dom"/>
</dbReference>
<dbReference type="NCBIfam" id="TIGR01511">
    <property type="entry name" value="ATPase-IB1_Cu"/>
    <property type="match status" value="1"/>
</dbReference>
<dbReference type="NCBIfam" id="TIGR01525">
    <property type="entry name" value="ATPase-IB_hvy"/>
    <property type="match status" value="1"/>
</dbReference>
<dbReference type="NCBIfam" id="TIGR01494">
    <property type="entry name" value="ATPase_P-type"/>
    <property type="match status" value="1"/>
</dbReference>
<dbReference type="NCBIfam" id="TIGR00003">
    <property type="entry name" value="copper ion binding protein"/>
    <property type="match status" value="2"/>
</dbReference>
<dbReference type="PANTHER" id="PTHR43520">
    <property type="entry name" value="ATP7, ISOFORM B"/>
    <property type="match status" value="1"/>
</dbReference>
<dbReference type="PANTHER" id="PTHR43520:SF8">
    <property type="entry name" value="P-TYPE CU(+) TRANSPORTER"/>
    <property type="match status" value="1"/>
</dbReference>
<dbReference type="Pfam" id="PF00122">
    <property type="entry name" value="E1-E2_ATPase"/>
    <property type="match status" value="1"/>
</dbReference>
<dbReference type="Pfam" id="PF00403">
    <property type="entry name" value="HMA"/>
    <property type="match status" value="2"/>
</dbReference>
<dbReference type="Pfam" id="PF00702">
    <property type="entry name" value="Hydrolase"/>
    <property type="match status" value="1"/>
</dbReference>
<dbReference type="PRINTS" id="PR00119">
    <property type="entry name" value="CATATPASE"/>
</dbReference>
<dbReference type="PRINTS" id="PR00943">
    <property type="entry name" value="CUATPASE"/>
</dbReference>
<dbReference type="SFLD" id="SFLDG00002">
    <property type="entry name" value="C1.7:_P-type_atpase_like"/>
    <property type="match status" value="1"/>
</dbReference>
<dbReference type="SFLD" id="SFLDF00027">
    <property type="entry name" value="p-type_atpase"/>
    <property type="match status" value="1"/>
</dbReference>
<dbReference type="SUPFAM" id="SSF81653">
    <property type="entry name" value="Calcium ATPase, transduction domain A"/>
    <property type="match status" value="1"/>
</dbReference>
<dbReference type="SUPFAM" id="SSF81665">
    <property type="entry name" value="Calcium ATPase, transmembrane domain M"/>
    <property type="match status" value="1"/>
</dbReference>
<dbReference type="SUPFAM" id="SSF56784">
    <property type="entry name" value="HAD-like"/>
    <property type="match status" value="1"/>
</dbReference>
<dbReference type="SUPFAM" id="SSF55008">
    <property type="entry name" value="HMA, heavy metal-associated domain"/>
    <property type="match status" value="2"/>
</dbReference>
<dbReference type="PROSITE" id="PS00154">
    <property type="entry name" value="ATPASE_E1_E2"/>
    <property type="match status" value="1"/>
</dbReference>
<dbReference type="PROSITE" id="PS01047">
    <property type="entry name" value="HMA_1"/>
    <property type="match status" value="2"/>
</dbReference>
<dbReference type="PROSITE" id="PS50846">
    <property type="entry name" value="HMA_2"/>
    <property type="match status" value="2"/>
</dbReference>
<comment type="function">
    <text evidence="1">Involved in copper export.</text>
</comment>
<comment type="catalytic activity">
    <reaction>
        <text>Cu(+)(in) + ATP + H2O = Cu(+)(out) + ADP + phosphate + H(+)</text>
        <dbReference type="Rhea" id="RHEA:25792"/>
        <dbReference type="ChEBI" id="CHEBI:15377"/>
        <dbReference type="ChEBI" id="CHEBI:15378"/>
        <dbReference type="ChEBI" id="CHEBI:30616"/>
        <dbReference type="ChEBI" id="CHEBI:43474"/>
        <dbReference type="ChEBI" id="CHEBI:49552"/>
        <dbReference type="ChEBI" id="CHEBI:456216"/>
        <dbReference type="EC" id="7.2.2.8"/>
    </reaction>
</comment>
<comment type="subcellular location">
    <subcellularLocation>
        <location evidence="1">Cell membrane</location>
        <topology evidence="1">Multi-pass membrane protein</topology>
    </subcellularLocation>
</comment>
<comment type="similarity">
    <text evidence="4">Belongs to the cation transport ATPase (P-type) (TC 3.A.3) family. Type IB subfamily.</text>
</comment>
<evidence type="ECO:0000250" key="1"/>
<evidence type="ECO:0000255" key="2"/>
<evidence type="ECO:0000255" key="3">
    <source>
        <dbReference type="PROSITE-ProRule" id="PRU00280"/>
    </source>
</evidence>
<evidence type="ECO:0000305" key="4"/>